<accession>Q7A1Z1</accession>
<sequence length="257" mass="28689">MSQIEFKNVSKVYPNGHVGLKNINLNIEKGEFAVIVGLSGAGKSTLLRSVNRLHDITSGEIFIQGKSITKAHGKALLEMRRNIGMIFQHFNLVKRSSVLRNVLSGRVGYHPTWKMVLGLFPKEDKIKAMDALERVNILDKYNQRSDELSGGQQQRISIARALCQESEIILADEPVASLDPLTTKQVMDDLRKINQELGITILINLHFVDLAKEYGTRIIGLRDGEVVYDGPASEATDDVFSEIYGRTIKEDEKLGVN</sequence>
<dbReference type="EC" id="7.3.2.2" evidence="1"/>
<dbReference type="EMBL" id="BA000033">
    <property type="protein sequence ID" value="BAB93981.1"/>
    <property type="molecule type" value="Genomic_DNA"/>
</dbReference>
<dbReference type="RefSeq" id="WP_000078092.1">
    <property type="nucleotide sequence ID" value="NC_003923.1"/>
</dbReference>
<dbReference type="SMR" id="Q7A1Z1"/>
<dbReference type="KEGG" id="sam:MW0116"/>
<dbReference type="HOGENOM" id="CLU_000604_1_22_9"/>
<dbReference type="GO" id="GO:0005886">
    <property type="term" value="C:plasma membrane"/>
    <property type="evidence" value="ECO:0007669"/>
    <property type="project" value="UniProtKB-SubCell"/>
</dbReference>
<dbReference type="GO" id="GO:0015416">
    <property type="term" value="F:ABC-type phosphonate transporter activity"/>
    <property type="evidence" value="ECO:0007669"/>
    <property type="project" value="UniProtKB-EC"/>
</dbReference>
<dbReference type="GO" id="GO:0005524">
    <property type="term" value="F:ATP binding"/>
    <property type="evidence" value="ECO:0007669"/>
    <property type="project" value="UniProtKB-KW"/>
</dbReference>
<dbReference type="GO" id="GO:0016887">
    <property type="term" value="F:ATP hydrolysis activity"/>
    <property type="evidence" value="ECO:0007669"/>
    <property type="project" value="InterPro"/>
</dbReference>
<dbReference type="CDD" id="cd03256">
    <property type="entry name" value="ABC_PhnC_transporter"/>
    <property type="match status" value="1"/>
</dbReference>
<dbReference type="Gene3D" id="3.40.50.300">
    <property type="entry name" value="P-loop containing nucleotide triphosphate hydrolases"/>
    <property type="match status" value="1"/>
</dbReference>
<dbReference type="InterPro" id="IPR003593">
    <property type="entry name" value="AAA+_ATPase"/>
</dbReference>
<dbReference type="InterPro" id="IPR003439">
    <property type="entry name" value="ABC_transporter-like_ATP-bd"/>
</dbReference>
<dbReference type="InterPro" id="IPR017871">
    <property type="entry name" value="ABC_transporter-like_CS"/>
</dbReference>
<dbReference type="InterPro" id="IPR012693">
    <property type="entry name" value="ABC_transpr_PhnC"/>
</dbReference>
<dbReference type="InterPro" id="IPR050086">
    <property type="entry name" value="MetN_ABC_transporter-like"/>
</dbReference>
<dbReference type="InterPro" id="IPR027417">
    <property type="entry name" value="P-loop_NTPase"/>
</dbReference>
<dbReference type="NCBIfam" id="TIGR02315">
    <property type="entry name" value="ABC_phnC"/>
    <property type="match status" value="1"/>
</dbReference>
<dbReference type="PANTHER" id="PTHR43166">
    <property type="entry name" value="AMINO ACID IMPORT ATP-BINDING PROTEIN"/>
    <property type="match status" value="1"/>
</dbReference>
<dbReference type="PANTHER" id="PTHR43166:SF6">
    <property type="entry name" value="PHOSPHONATES IMPORT ATP-BINDING PROTEIN PHNC"/>
    <property type="match status" value="1"/>
</dbReference>
<dbReference type="Pfam" id="PF00005">
    <property type="entry name" value="ABC_tran"/>
    <property type="match status" value="1"/>
</dbReference>
<dbReference type="SMART" id="SM00382">
    <property type="entry name" value="AAA"/>
    <property type="match status" value="1"/>
</dbReference>
<dbReference type="SUPFAM" id="SSF52540">
    <property type="entry name" value="P-loop containing nucleoside triphosphate hydrolases"/>
    <property type="match status" value="1"/>
</dbReference>
<dbReference type="PROSITE" id="PS00211">
    <property type="entry name" value="ABC_TRANSPORTER_1"/>
    <property type="match status" value="1"/>
</dbReference>
<dbReference type="PROSITE" id="PS50893">
    <property type="entry name" value="ABC_TRANSPORTER_2"/>
    <property type="match status" value="1"/>
</dbReference>
<dbReference type="PROSITE" id="PS51249">
    <property type="entry name" value="PHNC"/>
    <property type="match status" value="1"/>
</dbReference>
<comment type="function">
    <text evidence="1">Part of the ABC transporter complex PhnCDE involved in phosphonates import. Responsible for energy coupling to the transport system.</text>
</comment>
<comment type="catalytic activity">
    <reaction evidence="1">
        <text>phosphonate(out) + ATP + H2O = phosphonate(in) + ADP + phosphate + H(+)</text>
        <dbReference type="Rhea" id="RHEA:18065"/>
        <dbReference type="ChEBI" id="CHEBI:15377"/>
        <dbReference type="ChEBI" id="CHEBI:15378"/>
        <dbReference type="ChEBI" id="CHEBI:16215"/>
        <dbReference type="ChEBI" id="CHEBI:30616"/>
        <dbReference type="ChEBI" id="CHEBI:43474"/>
        <dbReference type="ChEBI" id="CHEBI:456216"/>
        <dbReference type="EC" id="7.3.2.2"/>
    </reaction>
</comment>
<comment type="subunit">
    <text evidence="1">The complex is composed of two ATP-binding proteins (PhnC), two transmembrane proteins (PhnE) and a solute-binding protein (PhnD).</text>
</comment>
<comment type="subcellular location">
    <subcellularLocation>
        <location evidence="1">Cell membrane</location>
        <topology evidence="1">Peripheral membrane protein</topology>
    </subcellularLocation>
</comment>
<comment type="similarity">
    <text evidence="1">Belongs to the ABC transporter superfamily. Phosphonates importer (TC 3.A.1.9.1) family.</text>
</comment>
<keyword id="KW-0067">ATP-binding</keyword>
<keyword id="KW-1003">Cell membrane</keyword>
<keyword id="KW-0472">Membrane</keyword>
<keyword id="KW-0547">Nucleotide-binding</keyword>
<keyword id="KW-0918">Phosphonate transport</keyword>
<keyword id="KW-1278">Translocase</keyword>
<keyword id="KW-0813">Transport</keyword>
<name>PHNC_STAAW</name>
<feature type="chain" id="PRO_0000092734" description="Phosphonates import ATP-binding protein PhnC">
    <location>
        <begin position="1"/>
        <end position="257"/>
    </location>
</feature>
<feature type="domain" description="ABC transporter" evidence="1">
    <location>
        <begin position="4"/>
        <end position="248"/>
    </location>
</feature>
<feature type="binding site" evidence="1">
    <location>
        <begin position="37"/>
        <end position="44"/>
    </location>
    <ligand>
        <name>ATP</name>
        <dbReference type="ChEBI" id="CHEBI:30616"/>
    </ligand>
</feature>
<organism>
    <name type="scientific">Staphylococcus aureus (strain MW2)</name>
    <dbReference type="NCBI Taxonomy" id="196620"/>
    <lineage>
        <taxon>Bacteria</taxon>
        <taxon>Bacillati</taxon>
        <taxon>Bacillota</taxon>
        <taxon>Bacilli</taxon>
        <taxon>Bacillales</taxon>
        <taxon>Staphylococcaceae</taxon>
        <taxon>Staphylococcus</taxon>
    </lineage>
</organism>
<protein>
    <recommendedName>
        <fullName evidence="1">Phosphonates import ATP-binding protein PhnC</fullName>
        <ecNumber evidence="1">7.3.2.2</ecNumber>
    </recommendedName>
</protein>
<evidence type="ECO:0000255" key="1">
    <source>
        <dbReference type="HAMAP-Rule" id="MF_01713"/>
    </source>
</evidence>
<proteinExistence type="inferred from homology"/>
<gene>
    <name evidence="1" type="primary">phnC</name>
    <name type="ordered locus">MW0116</name>
</gene>
<reference key="1">
    <citation type="journal article" date="2002" name="Lancet">
        <title>Genome and virulence determinants of high virulence community-acquired MRSA.</title>
        <authorList>
            <person name="Baba T."/>
            <person name="Takeuchi F."/>
            <person name="Kuroda M."/>
            <person name="Yuzawa H."/>
            <person name="Aoki K."/>
            <person name="Oguchi A."/>
            <person name="Nagai Y."/>
            <person name="Iwama N."/>
            <person name="Asano K."/>
            <person name="Naimi T."/>
            <person name="Kuroda H."/>
            <person name="Cui L."/>
            <person name="Yamamoto K."/>
            <person name="Hiramatsu K."/>
        </authorList>
    </citation>
    <scope>NUCLEOTIDE SEQUENCE [LARGE SCALE GENOMIC DNA]</scope>
    <source>
        <strain>MW2</strain>
    </source>
</reference>